<evidence type="ECO:0000255" key="1">
    <source>
        <dbReference type="HAMAP-Rule" id="MF_00321"/>
    </source>
</evidence>
<comment type="function">
    <text evidence="1">Necessary for normal cell division and for the maintenance of normal septation.</text>
</comment>
<comment type="cofactor">
    <cofactor evidence="1">
        <name>Mg(2+)</name>
        <dbReference type="ChEBI" id="CHEBI:18420"/>
    </cofactor>
</comment>
<comment type="similarity">
    <text evidence="1">Belongs to the TRAFAC class TrmE-Era-EngA-EngB-Septin-like GTPase superfamily. EngB GTPase family.</text>
</comment>
<protein>
    <recommendedName>
        <fullName evidence="1">Probable GTP-binding protein EngB</fullName>
    </recommendedName>
</protein>
<feature type="chain" id="PRO_0000266879" description="Probable GTP-binding protein EngB">
    <location>
        <begin position="1"/>
        <end position="196"/>
    </location>
</feature>
<feature type="domain" description="EngB-type G" evidence="1">
    <location>
        <begin position="22"/>
        <end position="196"/>
    </location>
</feature>
<feature type="binding site" evidence="1">
    <location>
        <begin position="30"/>
        <end position="37"/>
    </location>
    <ligand>
        <name>GTP</name>
        <dbReference type="ChEBI" id="CHEBI:37565"/>
    </ligand>
</feature>
<feature type="binding site" evidence="1">
    <location>
        <position position="37"/>
    </location>
    <ligand>
        <name>Mg(2+)</name>
        <dbReference type="ChEBI" id="CHEBI:18420"/>
    </ligand>
</feature>
<feature type="binding site" evidence="1">
    <location>
        <begin position="57"/>
        <end position="61"/>
    </location>
    <ligand>
        <name>GTP</name>
        <dbReference type="ChEBI" id="CHEBI:37565"/>
    </ligand>
</feature>
<feature type="binding site" evidence="1">
    <location>
        <position position="59"/>
    </location>
    <ligand>
        <name>Mg(2+)</name>
        <dbReference type="ChEBI" id="CHEBI:18420"/>
    </ligand>
</feature>
<feature type="binding site" evidence="1">
    <location>
        <begin position="75"/>
        <end position="78"/>
    </location>
    <ligand>
        <name>GTP</name>
        <dbReference type="ChEBI" id="CHEBI:37565"/>
    </ligand>
</feature>
<feature type="binding site" evidence="1">
    <location>
        <begin position="142"/>
        <end position="145"/>
    </location>
    <ligand>
        <name>GTP</name>
        <dbReference type="ChEBI" id="CHEBI:37565"/>
    </ligand>
</feature>
<feature type="binding site" evidence="1">
    <location>
        <begin position="175"/>
        <end position="177"/>
    </location>
    <ligand>
        <name>GTP</name>
        <dbReference type="ChEBI" id="CHEBI:37565"/>
    </ligand>
</feature>
<dbReference type="EMBL" id="CP000033">
    <property type="protein sequence ID" value="AAV42709.1"/>
    <property type="molecule type" value="Genomic_DNA"/>
</dbReference>
<dbReference type="RefSeq" id="YP_193740.1">
    <property type="nucleotide sequence ID" value="NC_006814.3"/>
</dbReference>
<dbReference type="SMR" id="Q5FKR5"/>
<dbReference type="STRING" id="272621.LBA0848"/>
<dbReference type="KEGG" id="lac:LBA0848"/>
<dbReference type="PATRIC" id="fig|272621.13.peg.810"/>
<dbReference type="eggNOG" id="COG0218">
    <property type="taxonomic scope" value="Bacteria"/>
</dbReference>
<dbReference type="HOGENOM" id="CLU_033732_3_0_9"/>
<dbReference type="OrthoDB" id="9804921at2"/>
<dbReference type="BioCyc" id="LACI272621:G1G49-859-MONOMER"/>
<dbReference type="Proteomes" id="UP000006381">
    <property type="component" value="Chromosome"/>
</dbReference>
<dbReference type="GO" id="GO:0005829">
    <property type="term" value="C:cytosol"/>
    <property type="evidence" value="ECO:0007669"/>
    <property type="project" value="TreeGrafter"/>
</dbReference>
<dbReference type="GO" id="GO:0005525">
    <property type="term" value="F:GTP binding"/>
    <property type="evidence" value="ECO:0007669"/>
    <property type="project" value="UniProtKB-UniRule"/>
</dbReference>
<dbReference type="GO" id="GO:0046872">
    <property type="term" value="F:metal ion binding"/>
    <property type="evidence" value="ECO:0007669"/>
    <property type="project" value="UniProtKB-KW"/>
</dbReference>
<dbReference type="GO" id="GO:0000917">
    <property type="term" value="P:division septum assembly"/>
    <property type="evidence" value="ECO:0007669"/>
    <property type="project" value="UniProtKB-KW"/>
</dbReference>
<dbReference type="CDD" id="cd01876">
    <property type="entry name" value="YihA_EngB"/>
    <property type="match status" value="1"/>
</dbReference>
<dbReference type="FunFam" id="3.40.50.300:FF:000098">
    <property type="entry name" value="Probable GTP-binding protein EngB"/>
    <property type="match status" value="1"/>
</dbReference>
<dbReference type="Gene3D" id="3.40.50.300">
    <property type="entry name" value="P-loop containing nucleotide triphosphate hydrolases"/>
    <property type="match status" value="1"/>
</dbReference>
<dbReference type="HAMAP" id="MF_00321">
    <property type="entry name" value="GTPase_EngB"/>
    <property type="match status" value="1"/>
</dbReference>
<dbReference type="InterPro" id="IPR030393">
    <property type="entry name" value="G_ENGB_dom"/>
</dbReference>
<dbReference type="InterPro" id="IPR006073">
    <property type="entry name" value="GTP-bd"/>
</dbReference>
<dbReference type="InterPro" id="IPR019987">
    <property type="entry name" value="GTP-bd_ribosome_bio_YsxC"/>
</dbReference>
<dbReference type="InterPro" id="IPR027417">
    <property type="entry name" value="P-loop_NTPase"/>
</dbReference>
<dbReference type="InterPro" id="IPR005225">
    <property type="entry name" value="Small_GTP-bd"/>
</dbReference>
<dbReference type="NCBIfam" id="TIGR03598">
    <property type="entry name" value="GTPase_YsxC"/>
    <property type="match status" value="1"/>
</dbReference>
<dbReference type="NCBIfam" id="TIGR00231">
    <property type="entry name" value="small_GTP"/>
    <property type="match status" value="1"/>
</dbReference>
<dbReference type="PANTHER" id="PTHR11649:SF13">
    <property type="entry name" value="ENGB-TYPE G DOMAIN-CONTAINING PROTEIN"/>
    <property type="match status" value="1"/>
</dbReference>
<dbReference type="PANTHER" id="PTHR11649">
    <property type="entry name" value="MSS1/TRME-RELATED GTP-BINDING PROTEIN"/>
    <property type="match status" value="1"/>
</dbReference>
<dbReference type="Pfam" id="PF01926">
    <property type="entry name" value="MMR_HSR1"/>
    <property type="match status" value="1"/>
</dbReference>
<dbReference type="SUPFAM" id="SSF52540">
    <property type="entry name" value="P-loop containing nucleoside triphosphate hydrolases"/>
    <property type="match status" value="1"/>
</dbReference>
<dbReference type="PROSITE" id="PS51706">
    <property type="entry name" value="G_ENGB"/>
    <property type="match status" value="1"/>
</dbReference>
<proteinExistence type="inferred from homology"/>
<organism>
    <name type="scientific">Lactobacillus acidophilus (strain ATCC 700396 / NCK56 / N2 / NCFM)</name>
    <dbReference type="NCBI Taxonomy" id="272621"/>
    <lineage>
        <taxon>Bacteria</taxon>
        <taxon>Bacillati</taxon>
        <taxon>Bacillota</taxon>
        <taxon>Bacilli</taxon>
        <taxon>Lactobacillales</taxon>
        <taxon>Lactobacillaceae</taxon>
        <taxon>Lactobacillus</taxon>
    </lineage>
</organism>
<gene>
    <name evidence="1" type="primary">engB</name>
    <name type="ordered locus">LBA0848</name>
</gene>
<keyword id="KW-0131">Cell cycle</keyword>
<keyword id="KW-0132">Cell division</keyword>
<keyword id="KW-0342">GTP-binding</keyword>
<keyword id="KW-0460">Magnesium</keyword>
<keyword id="KW-0479">Metal-binding</keyword>
<keyword id="KW-0547">Nucleotide-binding</keyword>
<keyword id="KW-1185">Reference proteome</keyword>
<keyword id="KW-0717">Septation</keyword>
<name>ENGB_LACAC</name>
<reference key="1">
    <citation type="journal article" date="2005" name="Proc. Natl. Acad. Sci. U.S.A.">
        <title>Complete genome sequence of the probiotic lactic acid bacterium Lactobacillus acidophilus NCFM.</title>
        <authorList>
            <person name="Altermann E."/>
            <person name="Russell W.M."/>
            <person name="Azcarate-Peril M.A."/>
            <person name="Barrangou R."/>
            <person name="Buck B.L."/>
            <person name="McAuliffe O."/>
            <person name="Souther N."/>
            <person name="Dobson A."/>
            <person name="Duong T."/>
            <person name="Callanan M."/>
            <person name="Lick S."/>
            <person name="Hamrick A."/>
            <person name="Cano R."/>
            <person name="Klaenhammer T.R."/>
        </authorList>
    </citation>
    <scope>NUCLEOTIDE SEQUENCE [LARGE SCALE GENOMIC DNA]</scope>
    <source>
        <strain>ATCC 700396 / NCK56 / N2 / NCFM</strain>
    </source>
</reference>
<sequence length="196" mass="22502">MIIKSSEYAVSAVKEEQYPKDNLPEIALAGRSNVGKSSLINTLLKRKNLARTSSQPGKTQTLNFYLVNDDFYLVDVPGYGYAKVSQKRRQEFGEMIQDYLETRPNLKGLIILIDSRHEPTKDDISMYEYAQYLNIPILVVCTKMDKIKKNQTNKVMTGLRKKLDLNYDHVTVLTFSSVTKFHVTELGNWIEDKISQ</sequence>
<accession>Q5FKR5</accession>